<protein>
    <recommendedName>
        <fullName evidence="1">Ribonuclease Y</fullName>
        <shortName evidence="1">RNase Y</shortName>
        <ecNumber evidence="1">3.1.-.-</ecNumber>
    </recommendedName>
</protein>
<proteinExistence type="inferred from homology"/>
<feature type="chain" id="PRO_0000344883" description="Ribonuclease Y">
    <location>
        <begin position="1"/>
        <end position="520"/>
    </location>
</feature>
<feature type="transmembrane region" description="Helical" evidence="1">
    <location>
        <begin position="1"/>
        <end position="21"/>
    </location>
</feature>
<feature type="domain" description="KH" evidence="1">
    <location>
        <begin position="210"/>
        <end position="295"/>
    </location>
</feature>
<feature type="domain" description="HD" evidence="2">
    <location>
        <begin position="336"/>
        <end position="429"/>
    </location>
</feature>
<accession>A0M2K0</accession>
<organism>
    <name type="scientific">Christiangramia forsetii (strain DSM 17595 / CGMCC 1.15422 / KT0803)</name>
    <name type="common">Gramella forsetii</name>
    <dbReference type="NCBI Taxonomy" id="411154"/>
    <lineage>
        <taxon>Bacteria</taxon>
        <taxon>Pseudomonadati</taxon>
        <taxon>Bacteroidota</taxon>
        <taxon>Flavobacteriia</taxon>
        <taxon>Flavobacteriales</taxon>
        <taxon>Flavobacteriaceae</taxon>
        <taxon>Christiangramia</taxon>
    </lineage>
</organism>
<dbReference type="EC" id="3.1.-.-" evidence="1"/>
<dbReference type="EMBL" id="CU207366">
    <property type="protein sequence ID" value="CAL66845.1"/>
    <property type="molecule type" value="Genomic_DNA"/>
</dbReference>
<dbReference type="RefSeq" id="WP_011709753.1">
    <property type="nucleotide sequence ID" value="NC_008571.1"/>
</dbReference>
<dbReference type="SMR" id="A0M2K0"/>
<dbReference type="STRING" id="411154.GFO_1875"/>
<dbReference type="KEGG" id="gfo:GFO_1875"/>
<dbReference type="eggNOG" id="COG1418">
    <property type="taxonomic scope" value="Bacteria"/>
</dbReference>
<dbReference type="HOGENOM" id="CLU_028328_1_0_10"/>
<dbReference type="OrthoDB" id="9803205at2"/>
<dbReference type="Proteomes" id="UP000000755">
    <property type="component" value="Chromosome"/>
</dbReference>
<dbReference type="GO" id="GO:0005886">
    <property type="term" value="C:plasma membrane"/>
    <property type="evidence" value="ECO:0007669"/>
    <property type="project" value="UniProtKB-SubCell"/>
</dbReference>
<dbReference type="GO" id="GO:0003723">
    <property type="term" value="F:RNA binding"/>
    <property type="evidence" value="ECO:0007669"/>
    <property type="project" value="UniProtKB-UniRule"/>
</dbReference>
<dbReference type="GO" id="GO:0004521">
    <property type="term" value="F:RNA endonuclease activity"/>
    <property type="evidence" value="ECO:0007669"/>
    <property type="project" value="UniProtKB-UniRule"/>
</dbReference>
<dbReference type="GO" id="GO:0006402">
    <property type="term" value="P:mRNA catabolic process"/>
    <property type="evidence" value="ECO:0007669"/>
    <property type="project" value="UniProtKB-UniRule"/>
</dbReference>
<dbReference type="CDD" id="cd00077">
    <property type="entry name" value="HDc"/>
    <property type="match status" value="1"/>
</dbReference>
<dbReference type="CDD" id="cd22431">
    <property type="entry name" value="KH-I_RNaseY"/>
    <property type="match status" value="1"/>
</dbReference>
<dbReference type="FunFam" id="1.10.3210.10:FF:000013">
    <property type="entry name" value="Ribonuclease Y"/>
    <property type="match status" value="1"/>
</dbReference>
<dbReference type="Gene3D" id="1.10.3210.10">
    <property type="entry name" value="Hypothetical protein af1432"/>
    <property type="match status" value="1"/>
</dbReference>
<dbReference type="Gene3D" id="3.30.1370.10">
    <property type="entry name" value="K Homology domain, type 1"/>
    <property type="match status" value="1"/>
</dbReference>
<dbReference type="HAMAP" id="MF_00335">
    <property type="entry name" value="RNase_Y"/>
    <property type="match status" value="1"/>
</dbReference>
<dbReference type="InterPro" id="IPR003607">
    <property type="entry name" value="HD/PDEase_dom"/>
</dbReference>
<dbReference type="InterPro" id="IPR006674">
    <property type="entry name" value="HD_domain"/>
</dbReference>
<dbReference type="InterPro" id="IPR006675">
    <property type="entry name" value="HDIG_dom"/>
</dbReference>
<dbReference type="InterPro" id="IPR004087">
    <property type="entry name" value="KH_dom"/>
</dbReference>
<dbReference type="InterPro" id="IPR004088">
    <property type="entry name" value="KH_dom_type_1"/>
</dbReference>
<dbReference type="InterPro" id="IPR036612">
    <property type="entry name" value="KH_dom_type_1_sf"/>
</dbReference>
<dbReference type="InterPro" id="IPR017705">
    <property type="entry name" value="Ribonuclease_Y"/>
</dbReference>
<dbReference type="InterPro" id="IPR022711">
    <property type="entry name" value="RNase_Y_N"/>
</dbReference>
<dbReference type="NCBIfam" id="TIGR00277">
    <property type="entry name" value="HDIG"/>
    <property type="match status" value="1"/>
</dbReference>
<dbReference type="NCBIfam" id="TIGR03319">
    <property type="entry name" value="RNase_Y"/>
    <property type="match status" value="1"/>
</dbReference>
<dbReference type="PANTHER" id="PTHR12826">
    <property type="entry name" value="RIBONUCLEASE Y"/>
    <property type="match status" value="1"/>
</dbReference>
<dbReference type="PANTHER" id="PTHR12826:SF15">
    <property type="entry name" value="RIBONUCLEASE Y"/>
    <property type="match status" value="1"/>
</dbReference>
<dbReference type="Pfam" id="PF01966">
    <property type="entry name" value="HD"/>
    <property type="match status" value="1"/>
</dbReference>
<dbReference type="Pfam" id="PF00013">
    <property type="entry name" value="KH_1"/>
    <property type="match status" value="1"/>
</dbReference>
<dbReference type="Pfam" id="PF12072">
    <property type="entry name" value="RNase_Y_N"/>
    <property type="match status" value="1"/>
</dbReference>
<dbReference type="SMART" id="SM00471">
    <property type="entry name" value="HDc"/>
    <property type="match status" value="1"/>
</dbReference>
<dbReference type="SMART" id="SM00322">
    <property type="entry name" value="KH"/>
    <property type="match status" value="1"/>
</dbReference>
<dbReference type="SUPFAM" id="SSF54791">
    <property type="entry name" value="Eukaryotic type KH-domain (KH-domain type I)"/>
    <property type="match status" value="1"/>
</dbReference>
<dbReference type="SUPFAM" id="SSF109604">
    <property type="entry name" value="HD-domain/PDEase-like"/>
    <property type="match status" value="1"/>
</dbReference>
<dbReference type="PROSITE" id="PS51831">
    <property type="entry name" value="HD"/>
    <property type="match status" value="1"/>
</dbReference>
<dbReference type="PROSITE" id="PS50084">
    <property type="entry name" value="KH_TYPE_1"/>
    <property type="match status" value="1"/>
</dbReference>
<sequence length="520" mass="57730">MEILIIVIAAVVGLALGFAIAKMLEKKQASGTIASAKKEAGSILKEAKAEGESIKKDKILQAKEKFIELKSEHEKVILSRDKKINDAEKRIKDKESHVSNELGKNKKLNKDLEEKVADYDHRLDFLEKKQEDIDKLHNSKVQQLEVISGLSAEDAKAQLIESLKDTAKADAMSIIQDTVEEAKLTAQQEARKIIINTIQRIGTEEAIENCVSVFNLESDDVKGRIIGREGRNIRALEAATGVEIIVDDTPEAIILSCFDSVRREVARLSLHKLVTDGRIHPARIEEVVKKTRKQIEEEIIDIGKRTVIDLGIHGLQPELIKMVGRMKYRSSYGQNLLQHSREVAKLCGVMAAELGLNPKLAKRAGLLHDIGKVPETETEVPHAILGMQWAEKHGEKPEVCNAIGAHHDEIEMNSLLSPIVQVCDAISGARPGARRQVLDSYIQRLKDLEEIAFGFGGVKKAYAIQAGRELRVIVESEKVSDEKASNLSFEISQKIQTDMTYPGQVKITVIRETRAVNVAK</sequence>
<gene>
    <name evidence="1" type="primary">rny</name>
    <name type="ordered locus">GFO_1875</name>
</gene>
<name>RNY_CHRFK</name>
<keyword id="KW-1003">Cell membrane</keyword>
<keyword id="KW-0255">Endonuclease</keyword>
<keyword id="KW-0378">Hydrolase</keyword>
<keyword id="KW-0472">Membrane</keyword>
<keyword id="KW-0540">Nuclease</keyword>
<keyword id="KW-0694">RNA-binding</keyword>
<keyword id="KW-0812">Transmembrane</keyword>
<keyword id="KW-1133">Transmembrane helix</keyword>
<evidence type="ECO:0000255" key="1">
    <source>
        <dbReference type="HAMAP-Rule" id="MF_00335"/>
    </source>
</evidence>
<evidence type="ECO:0000255" key="2">
    <source>
        <dbReference type="PROSITE-ProRule" id="PRU01175"/>
    </source>
</evidence>
<comment type="function">
    <text evidence="1">Endoribonuclease that initiates mRNA decay.</text>
</comment>
<comment type="subcellular location">
    <subcellularLocation>
        <location evidence="1">Cell membrane</location>
        <topology evidence="1">Single-pass membrane protein</topology>
    </subcellularLocation>
</comment>
<comment type="similarity">
    <text evidence="1">Belongs to the RNase Y family.</text>
</comment>
<reference key="1">
    <citation type="journal article" date="2006" name="Environ. Microbiol.">
        <title>Whole genome analysis of the marine Bacteroidetes'Gramella forsetii' reveals adaptations to degradation of polymeric organic matter.</title>
        <authorList>
            <person name="Bauer M."/>
            <person name="Kube M."/>
            <person name="Teeling H."/>
            <person name="Richter M."/>
            <person name="Lombardot T."/>
            <person name="Allers E."/>
            <person name="Wuerdemann C.A."/>
            <person name="Quast C."/>
            <person name="Kuhl H."/>
            <person name="Knaust F."/>
            <person name="Woebken D."/>
            <person name="Bischof K."/>
            <person name="Mussmann M."/>
            <person name="Choudhuri J.V."/>
            <person name="Meyer F."/>
            <person name="Reinhardt R."/>
            <person name="Amann R.I."/>
            <person name="Gloeckner F.O."/>
        </authorList>
    </citation>
    <scope>NUCLEOTIDE SEQUENCE [LARGE SCALE GENOMIC DNA]</scope>
    <source>
        <strain>DSM 17595 / CGMCC 1.15422 / KT0803</strain>
    </source>
</reference>